<protein>
    <recommendedName>
        <fullName evidence="1">NAD(P)H-quinone oxidoreductase subunit K</fullName>
        <ecNumber evidence="1">7.1.1.-</ecNumber>
    </recommendedName>
    <alternativeName>
        <fullName evidence="1">NAD(P)H dehydrogenase I subunit K</fullName>
    </alternativeName>
    <alternativeName>
        <fullName evidence="1">NDH-1 subunit K</fullName>
        <shortName evidence="1">NDH-K</shortName>
    </alternativeName>
</protein>
<gene>
    <name evidence="1" type="primary">ndhK</name>
    <name type="ordered locus">P9215_03181</name>
</gene>
<sequence>MNPQLSPKAIREIREGTCNPLGAPQVTTDLSENIILTSLDDLHNWARLSSLWPLLYGTACCFIEFAALIGSRFDFDRFGLVPRSSPRQADLLIVAGTVTMKMAPALVRLYEQMPEPKYVIAMGACTITGGMFSADSTTAVRGVDKLIPVDLYLPGCPPRPEAIFDAVIKLRKKVGNESILERKKTEQTHRYITSDHEMNLVFSENTGEYLNKTSAKVISSSQKEKITELPEKTEITNTEKD</sequence>
<feature type="chain" id="PRO_0000358451" description="NAD(P)H-quinone oxidoreductase subunit K">
    <location>
        <begin position="1"/>
        <end position="241"/>
    </location>
</feature>
<feature type="region of interest" description="Disordered" evidence="2">
    <location>
        <begin position="220"/>
        <end position="241"/>
    </location>
</feature>
<feature type="compositionally biased region" description="Basic and acidic residues" evidence="2">
    <location>
        <begin position="222"/>
        <end position="241"/>
    </location>
</feature>
<feature type="binding site" evidence="1">
    <location>
        <position position="60"/>
    </location>
    <ligand>
        <name>[4Fe-4S] cluster</name>
        <dbReference type="ChEBI" id="CHEBI:49883"/>
    </ligand>
</feature>
<feature type="binding site" evidence="1">
    <location>
        <position position="61"/>
    </location>
    <ligand>
        <name>[4Fe-4S] cluster</name>
        <dbReference type="ChEBI" id="CHEBI:49883"/>
    </ligand>
</feature>
<feature type="binding site" evidence="1">
    <location>
        <position position="125"/>
    </location>
    <ligand>
        <name>[4Fe-4S] cluster</name>
        <dbReference type="ChEBI" id="CHEBI:49883"/>
    </ligand>
</feature>
<feature type="binding site" evidence="1">
    <location>
        <position position="156"/>
    </location>
    <ligand>
        <name>[4Fe-4S] cluster</name>
        <dbReference type="ChEBI" id="CHEBI:49883"/>
    </ligand>
</feature>
<dbReference type="EC" id="7.1.1.-" evidence="1"/>
<dbReference type="EMBL" id="CP000825">
    <property type="protein sequence ID" value="ABV49935.1"/>
    <property type="molecule type" value="Genomic_DNA"/>
</dbReference>
<dbReference type="SMR" id="A8G2V4"/>
<dbReference type="STRING" id="93060.P9215_03181"/>
<dbReference type="KEGG" id="pmh:P9215_03181"/>
<dbReference type="eggNOG" id="COG0377">
    <property type="taxonomic scope" value="Bacteria"/>
</dbReference>
<dbReference type="HOGENOM" id="CLU_055737_2_0_3"/>
<dbReference type="OrthoDB" id="9786737at2"/>
<dbReference type="Proteomes" id="UP000002014">
    <property type="component" value="Chromosome"/>
</dbReference>
<dbReference type="GO" id="GO:0031676">
    <property type="term" value="C:plasma membrane-derived thylakoid membrane"/>
    <property type="evidence" value="ECO:0007669"/>
    <property type="project" value="UniProtKB-SubCell"/>
</dbReference>
<dbReference type="GO" id="GO:0045271">
    <property type="term" value="C:respiratory chain complex I"/>
    <property type="evidence" value="ECO:0007669"/>
    <property type="project" value="TreeGrafter"/>
</dbReference>
<dbReference type="GO" id="GO:0051539">
    <property type="term" value="F:4 iron, 4 sulfur cluster binding"/>
    <property type="evidence" value="ECO:0007669"/>
    <property type="project" value="UniProtKB-KW"/>
</dbReference>
<dbReference type="GO" id="GO:0005506">
    <property type="term" value="F:iron ion binding"/>
    <property type="evidence" value="ECO:0007669"/>
    <property type="project" value="UniProtKB-UniRule"/>
</dbReference>
<dbReference type="GO" id="GO:0008137">
    <property type="term" value="F:NADH dehydrogenase (ubiquinone) activity"/>
    <property type="evidence" value="ECO:0007669"/>
    <property type="project" value="InterPro"/>
</dbReference>
<dbReference type="GO" id="GO:0048038">
    <property type="term" value="F:quinone binding"/>
    <property type="evidence" value="ECO:0007669"/>
    <property type="project" value="UniProtKB-KW"/>
</dbReference>
<dbReference type="GO" id="GO:0009060">
    <property type="term" value="P:aerobic respiration"/>
    <property type="evidence" value="ECO:0007669"/>
    <property type="project" value="TreeGrafter"/>
</dbReference>
<dbReference type="GO" id="GO:0015990">
    <property type="term" value="P:electron transport coupled proton transport"/>
    <property type="evidence" value="ECO:0007669"/>
    <property type="project" value="TreeGrafter"/>
</dbReference>
<dbReference type="GO" id="GO:0019684">
    <property type="term" value="P:photosynthesis, light reaction"/>
    <property type="evidence" value="ECO:0007669"/>
    <property type="project" value="UniProtKB-UniRule"/>
</dbReference>
<dbReference type="FunFam" id="3.40.50.12280:FF:000003">
    <property type="entry name" value="NAD(P)H-quinone oxidoreductase subunit K, chloroplastic"/>
    <property type="match status" value="1"/>
</dbReference>
<dbReference type="Gene3D" id="3.40.50.12280">
    <property type="match status" value="1"/>
</dbReference>
<dbReference type="HAMAP" id="MF_01356">
    <property type="entry name" value="NDH1_NuoB"/>
    <property type="match status" value="1"/>
</dbReference>
<dbReference type="InterPro" id="IPR006137">
    <property type="entry name" value="NADH_UbQ_OxRdtase-like_20kDa"/>
</dbReference>
<dbReference type="InterPro" id="IPR006138">
    <property type="entry name" value="NADH_UQ_OxRdtase_20Kd_su"/>
</dbReference>
<dbReference type="NCBIfam" id="TIGR01957">
    <property type="entry name" value="nuoB_fam"/>
    <property type="match status" value="1"/>
</dbReference>
<dbReference type="NCBIfam" id="NF005012">
    <property type="entry name" value="PRK06411.1"/>
    <property type="match status" value="1"/>
</dbReference>
<dbReference type="PANTHER" id="PTHR11995">
    <property type="entry name" value="NADH DEHYDROGENASE"/>
    <property type="match status" value="1"/>
</dbReference>
<dbReference type="PANTHER" id="PTHR11995:SF14">
    <property type="entry name" value="NADH DEHYDROGENASE [UBIQUINONE] IRON-SULFUR PROTEIN 7, MITOCHONDRIAL"/>
    <property type="match status" value="1"/>
</dbReference>
<dbReference type="Pfam" id="PF01058">
    <property type="entry name" value="Oxidored_q6"/>
    <property type="match status" value="1"/>
</dbReference>
<dbReference type="SUPFAM" id="SSF56770">
    <property type="entry name" value="HydA/Nqo6-like"/>
    <property type="match status" value="1"/>
</dbReference>
<dbReference type="PROSITE" id="PS01150">
    <property type="entry name" value="COMPLEX1_20K"/>
    <property type="match status" value="1"/>
</dbReference>
<proteinExistence type="inferred from homology"/>
<accession>A8G2V4</accession>
<keyword id="KW-0004">4Fe-4S</keyword>
<keyword id="KW-0408">Iron</keyword>
<keyword id="KW-0411">Iron-sulfur</keyword>
<keyword id="KW-0472">Membrane</keyword>
<keyword id="KW-0479">Metal-binding</keyword>
<keyword id="KW-0520">NAD</keyword>
<keyword id="KW-0521">NADP</keyword>
<keyword id="KW-0618">Plastoquinone</keyword>
<keyword id="KW-0874">Quinone</keyword>
<keyword id="KW-0793">Thylakoid</keyword>
<keyword id="KW-1278">Translocase</keyword>
<keyword id="KW-0813">Transport</keyword>
<organism>
    <name type="scientific">Prochlorococcus marinus (strain MIT 9215)</name>
    <dbReference type="NCBI Taxonomy" id="93060"/>
    <lineage>
        <taxon>Bacteria</taxon>
        <taxon>Bacillati</taxon>
        <taxon>Cyanobacteriota</taxon>
        <taxon>Cyanophyceae</taxon>
        <taxon>Synechococcales</taxon>
        <taxon>Prochlorococcaceae</taxon>
        <taxon>Prochlorococcus</taxon>
    </lineage>
</organism>
<evidence type="ECO:0000255" key="1">
    <source>
        <dbReference type="HAMAP-Rule" id="MF_01356"/>
    </source>
</evidence>
<evidence type="ECO:0000256" key="2">
    <source>
        <dbReference type="SAM" id="MobiDB-lite"/>
    </source>
</evidence>
<name>NDHK_PROM2</name>
<comment type="function">
    <text evidence="1">NDH-1 shuttles electrons from an unknown electron donor, via FMN and iron-sulfur (Fe-S) centers, to quinones in the respiratory and/or the photosynthetic chain. The immediate electron acceptor for the enzyme in this species is believed to be plastoquinone. Couples the redox reaction to proton translocation, and thus conserves the redox energy in a proton gradient. Cyanobacterial NDH-1 also plays a role in inorganic carbon-concentration.</text>
</comment>
<comment type="catalytic activity">
    <reaction evidence="1">
        <text>a plastoquinone + NADH + (n+1) H(+)(in) = a plastoquinol + NAD(+) + n H(+)(out)</text>
        <dbReference type="Rhea" id="RHEA:42608"/>
        <dbReference type="Rhea" id="RHEA-COMP:9561"/>
        <dbReference type="Rhea" id="RHEA-COMP:9562"/>
        <dbReference type="ChEBI" id="CHEBI:15378"/>
        <dbReference type="ChEBI" id="CHEBI:17757"/>
        <dbReference type="ChEBI" id="CHEBI:57540"/>
        <dbReference type="ChEBI" id="CHEBI:57945"/>
        <dbReference type="ChEBI" id="CHEBI:62192"/>
    </reaction>
</comment>
<comment type="catalytic activity">
    <reaction evidence="1">
        <text>a plastoquinone + NADPH + (n+1) H(+)(in) = a plastoquinol + NADP(+) + n H(+)(out)</text>
        <dbReference type="Rhea" id="RHEA:42612"/>
        <dbReference type="Rhea" id="RHEA-COMP:9561"/>
        <dbReference type="Rhea" id="RHEA-COMP:9562"/>
        <dbReference type="ChEBI" id="CHEBI:15378"/>
        <dbReference type="ChEBI" id="CHEBI:17757"/>
        <dbReference type="ChEBI" id="CHEBI:57783"/>
        <dbReference type="ChEBI" id="CHEBI:58349"/>
        <dbReference type="ChEBI" id="CHEBI:62192"/>
    </reaction>
</comment>
<comment type="cofactor">
    <cofactor evidence="1">
        <name>[4Fe-4S] cluster</name>
        <dbReference type="ChEBI" id="CHEBI:49883"/>
    </cofactor>
    <text evidence="1">Binds 1 [4Fe-4S] cluster.</text>
</comment>
<comment type="subunit">
    <text evidence="1">NDH-1 can be composed of about 15 different subunits; different subcomplexes with different compositions have been identified which probably have different functions.</text>
</comment>
<comment type="subcellular location">
    <subcellularLocation>
        <location evidence="1">Cellular thylakoid membrane</location>
        <topology evidence="1">Peripheral membrane protein</topology>
        <orientation evidence="1">Cytoplasmic side</orientation>
    </subcellularLocation>
</comment>
<comment type="similarity">
    <text evidence="1">Belongs to the complex I 20 kDa subunit family.</text>
</comment>
<reference key="1">
    <citation type="journal article" date="2007" name="PLoS Genet.">
        <title>Patterns and implications of gene gain and loss in the evolution of Prochlorococcus.</title>
        <authorList>
            <person name="Kettler G.C."/>
            <person name="Martiny A.C."/>
            <person name="Huang K."/>
            <person name="Zucker J."/>
            <person name="Coleman M.L."/>
            <person name="Rodrigue S."/>
            <person name="Chen F."/>
            <person name="Lapidus A."/>
            <person name="Ferriera S."/>
            <person name="Johnson J."/>
            <person name="Steglich C."/>
            <person name="Church G.M."/>
            <person name="Richardson P."/>
            <person name="Chisholm S.W."/>
        </authorList>
    </citation>
    <scope>NUCLEOTIDE SEQUENCE [LARGE SCALE GENOMIC DNA]</scope>
    <source>
        <strain>MIT 9215</strain>
    </source>
</reference>